<comment type="function">
    <text evidence="5">Pyrroloquinoline quinone (PPQ)-dependent oxidoreductase that catalyzes the oxidation of various sugars such as L-fucose.</text>
</comment>
<comment type="cofactor">
    <cofactor evidence="1">
        <name>Ca(2+)</name>
        <dbReference type="ChEBI" id="CHEBI:29108"/>
    </cofactor>
</comment>
<comment type="cofactor">
    <cofactor evidence="5">
        <name>pyrroloquinoline quinone</name>
        <dbReference type="ChEBI" id="CHEBI:58442"/>
    </cofactor>
</comment>
<comment type="biophysicochemical properties">
    <kinetics>
        <KM evidence="5">99.9 mM for l-fucose</KM>
    </kinetics>
    <phDependence>
        <text evidence="5">Optimum pH is 4.5.</text>
    </phDependence>
</comment>
<comment type="subcellular location">
    <subcellularLocation>
        <location evidence="8">Secreted</location>
    </subcellularLocation>
</comment>
<comment type="domain">
    <text evidence="8">In contrast to Coprinopsis cinerea PDH, the first AA12 family member which has been characterized, Hypocrea jecorina AA12 contains only the PQQ-dependent dehydrogenase domain (AA12 domain) which is not flanked by an N-terminal cytochrome domain (found in AA8 family enzymes) domain and a C-terminal CBM1 domain.</text>
</comment>
<comment type="similarity">
    <text evidence="7">Belongs to the sugar dehydrogenase AA12 family.</text>
</comment>
<keyword id="KW-0106">Calcium</keyword>
<keyword id="KW-1015">Disulfide bond</keyword>
<keyword id="KW-0325">Glycoprotein</keyword>
<keyword id="KW-0479">Metal-binding</keyword>
<keyword id="KW-0560">Oxidoreductase</keyword>
<keyword id="KW-1185">Reference proteome</keyword>
<keyword id="KW-0964">Secreted</keyword>
<keyword id="KW-0732">Signal</keyword>
<name>AA12_HYPJQ</name>
<sequence length="430" mass="45404">MARLAPHTLLLALFVFLFGSCTAQNCTTNNLQVTYPAPVAADGWEYRLISTGLTAPRSIVFDSTGGLLVLDAGVGVRRLTLQDNGGTCLSVTANATLIADTALNHGLAISADGGTIYASTVNDVYAYTYNEQTNTVDPTTRRTVVTNMTNTDHVTRTLLLSSRLPNELLVSRGSAANEDPQARNVTSGHSQIRAYDISTLAATDPPFDFVAGTLIGWGLRDSVGVGENPTNGGIWSVENSVDDLTREGVDVHQDNPGEELNFHGILGNTANQGGNYGYPDCYALWSTAGFPDLGALEVGDQFASDNATAGVTDATCNTNFVDPRLVFQAHVSPLDIKFNTNGTTAYITFHGSSDIVSVAFGLNGQPTSPMDSTTAANNILTSPDLTQCPDDCFTPVGLTFDTIGRLFFSSDSTGEIFVLQQSADDGNGDG</sequence>
<protein>
    <recommendedName>
        <fullName evidence="6">Pyrroloquinoline quinone-dependent sugar dehydrogenase</fullName>
        <ecNumber evidence="4">1.1.99.-</ecNumber>
    </recommendedName>
    <alternativeName>
        <fullName evidence="6">AA12 family sugar dehydrogenase</fullName>
    </alternativeName>
</protein>
<organism>
    <name type="scientific">Hypocrea jecorina (strain QM6a)</name>
    <name type="common">Trichoderma reesei</name>
    <dbReference type="NCBI Taxonomy" id="431241"/>
    <lineage>
        <taxon>Eukaryota</taxon>
        <taxon>Fungi</taxon>
        <taxon>Dikarya</taxon>
        <taxon>Ascomycota</taxon>
        <taxon>Pezizomycotina</taxon>
        <taxon>Sordariomycetes</taxon>
        <taxon>Hypocreomycetidae</taxon>
        <taxon>Hypocreales</taxon>
        <taxon>Hypocreaceae</taxon>
        <taxon>Trichoderma</taxon>
    </lineage>
</organism>
<dbReference type="EC" id="1.1.99.-" evidence="4"/>
<dbReference type="EMBL" id="GL985071">
    <property type="protein sequence ID" value="EGR46829.1"/>
    <property type="molecule type" value="Genomic_DNA"/>
</dbReference>
<dbReference type="RefSeq" id="XP_006967288.1">
    <property type="nucleotide sequence ID" value="XM_006967226.1"/>
</dbReference>
<dbReference type="SMR" id="G0RPY6"/>
<dbReference type="STRING" id="431241.G0RPY6"/>
<dbReference type="EnsemblFungi" id="EGR46829">
    <property type="protein sequence ID" value="EGR46829"/>
    <property type="gene ID" value="TRIREDRAFT_65275"/>
</dbReference>
<dbReference type="GeneID" id="18487290"/>
<dbReference type="KEGG" id="tre:TRIREDRAFT_65275"/>
<dbReference type="VEuPathDB" id="FungiDB:TRIREDRAFT_65275"/>
<dbReference type="eggNOG" id="ENOG502S0Y3">
    <property type="taxonomic scope" value="Eukaryota"/>
</dbReference>
<dbReference type="HOGENOM" id="CLU_039534_1_1_1"/>
<dbReference type="OrthoDB" id="507128at2759"/>
<dbReference type="Proteomes" id="UP000008984">
    <property type="component" value="Unassembled WGS sequence"/>
</dbReference>
<dbReference type="GO" id="GO:0005576">
    <property type="term" value="C:extracellular region"/>
    <property type="evidence" value="ECO:0007669"/>
    <property type="project" value="UniProtKB-SubCell"/>
</dbReference>
<dbReference type="GO" id="GO:0046872">
    <property type="term" value="F:metal ion binding"/>
    <property type="evidence" value="ECO:0007669"/>
    <property type="project" value="UniProtKB-KW"/>
</dbReference>
<dbReference type="GO" id="GO:0016491">
    <property type="term" value="F:oxidoreductase activity"/>
    <property type="evidence" value="ECO:0007669"/>
    <property type="project" value="UniProtKB-KW"/>
</dbReference>
<dbReference type="Gene3D" id="2.120.10.30">
    <property type="entry name" value="TolB, C-terminal domain"/>
    <property type="match status" value="1"/>
</dbReference>
<dbReference type="InterPro" id="IPR011042">
    <property type="entry name" value="6-blade_b-propeller_TolB-like"/>
</dbReference>
<dbReference type="InterPro" id="IPR054539">
    <property type="entry name" value="PDH_beta-prop"/>
</dbReference>
<dbReference type="InterPro" id="IPR011041">
    <property type="entry name" value="Quinoprot_gluc/sorb_DH_b-prop"/>
</dbReference>
<dbReference type="Pfam" id="PF22807">
    <property type="entry name" value="TrAA12"/>
    <property type="match status" value="1"/>
</dbReference>
<dbReference type="SUPFAM" id="SSF50952">
    <property type="entry name" value="Soluble quinoprotein glucose dehydrogenase"/>
    <property type="match status" value="1"/>
</dbReference>
<dbReference type="PROSITE" id="PS51257">
    <property type="entry name" value="PROKAR_LIPOPROTEIN"/>
    <property type="match status" value="1"/>
</dbReference>
<accession>G0RPY6</accession>
<proteinExistence type="evidence at protein level"/>
<reference key="1">
    <citation type="journal article" date="2008" name="Nat. Biotechnol.">
        <title>Genome sequencing and analysis of the biomass-degrading fungus Trichoderma reesei (syn. Hypocrea jecorina).</title>
        <authorList>
            <person name="Martinez D."/>
            <person name="Berka R.M."/>
            <person name="Henrissat B."/>
            <person name="Saloheimo M."/>
            <person name="Arvas M."/>
            <person name="Baker S.E."/>
            <person name="Chapman J."/>
            <person name="Chertkov O."/>
            <person name="Coutinho P.M."/>
            <person name="Cullen D."/>
            <person name="Danchin E.G."/>
            <person name="Grigoriev I.V."/>
            <person name="Harris P."/>
            <person name="Jackson M."/>
            <person name="Kubicek C.P."/>
            <person name="Han C.S."/>
            <person name="Ho I."/>
            <person name="Larrondo L.F."/>
            <person name="de Leon A.L."/>
            <person name="Magnuson J.K."/>
            <person name="Merino S."/>
            <person name="Misra M."/>
            <person name="Nelson B."/>
            <person name="Putnam N."/>
            <person name="Robbertse B."/>
            <person name="Salamov A.A."/>
            <person name="Schmoll M."/>
            <person name="Terry A."/>
            <person name="Thayer N."/>
            <person name="Westerholm-Parvinen A."/>
            <person name="Schoch C.L."/>
            <person name="Yao J."/>
            <person name="Barabote R."/>
            <person name="Nelson M.A."/>
            <person name="Detter C."/>
            <person name="Bruce D."/>
            <person name="Kuske C.R."/>
            <person name="Xie G."/>
            <person name="Richardson P."/>
            <person name="Rokhsar D.S."/>
            <person name="Lucas S.M."/>
            <person name="Rubin E.M."/>
            <person name="Dunn-Coleman N."/>
            <person name="Ward M."/>
            <person name="Brettin T.S."/>
        </authorList>
    </citation>
    <scope>NUCLEOTIDE SEQUENCE [LARGE SCALE GENOMIC DNA]</scope>
    <source>
        <strain>QM6a</strain>
    </source>
</reference>
<reference key="2">
    <citation type="journal article" date="2019" name="Appl. Environ. Microbiol.">
        <title>Trichoderma reesei dehydrogenase, a pyrroloquinoline quinone-dependent member of auxiliary activity family 12 of the carbohydrate-active enzymes database: functional and structural characterization.</title>
        <authorList>
            <person name="Turbe-Doan A."/>
            <person name="Record E."/>
            <person name="Lombard V."/>
            <person name="Kumar R."/>
            <person name="Levasseur A."/>
            <person name="Henrissat B."/>
            <person name="Garron M.L."/>
        </authorList>
    </citation>
    <scope>FUNCTION</scope>
    <scope>CATALYTIC ACTIVITY</scope>
    <scope>BIOPHYSICOCHEMICAL PROPERTIES</scope>
    <scope>COFACTOR</scope>
    <scope>DOMAIN</scope>
</reference>
<gene>
    <name evidence="6" type="primary">AA12</name>
    <name type="ORF">TRIREDRAFT_65275</name>
</gene>
<feature type="signal peptide" evidence="2">
    <location>
        <begin position="1"/>
        <end position="23"/>
    </location>
</feature>
<feature type="chain" id="PRO_5003408930" description="Pyrroloquinoline quinone-dependent sugar dehydrogenase" evidence="2">
    <location>
        <begin position="24"/>
        <end position="430"/>
    </location>
</feature>
<feature type="binding site" evidence="1">
    <location>
        <position position="57"/>
    </location>
    <ligand>
        <name>pyrroloquinoline quinone</name>
        <dbReference type="ChEBI" id="CHEBI:58442"/>
    </ligand>
</feature>
<feature type="binding site" evidence="1">
    <location>
        <position position="153"/>
    </location>
    <ligand>
        <name>pyrroloquinoline quinone</name>
        <dbReference type="ChEBI" id="CHEBI:58442"/>
    </ligand>
</feature>
<feature type="binding site" evidence="1">
    <location>
        <position position="220"/>
    </location>
    <ligand>
        <name>pyrroloquinoline quinone</name>
        <dbReference type="ChEBI" id="CHEBI:58442"/>
    </ligand>
</feature>
<feature type="binding site" evidence="1">
    <location>
        <position position="240"/>
    </location>
    <ligand>
        <name>Ca(2+)</name>
        <dbReference type="ChEBI" id="CHEBI:29108"/>
    </ligand>
</feature>
<feature type="binding site" evidence="1">
    <location>
        <position position="242"/>
    </location>
    <ligand>
        <name>Ca(2+)</name>
        <dbReference type="ChEBI" id="CHEBI:29108"/>
    </ligand>
</feature>
<feature type="binding site" evidence="1">
    <location>
        <position position="330"/>
    </location>
    <ligand>
        <name>pyrroloquinoline quinone</name>
        <dbReference type="ChEBI" id="CHEBI:58442"/>
    </ligand>
</feature>
<feature type="binding site" evidence="1">
    <location>
        <position position="350"/>
    </location>
    <ligand>
        <name>pyrroloquinoline quinone</name>
        <dbReference type="ChEBI" id="CHEBI:58442"/>
    </ligand>
</feature>
<feature type="glycosylation site" description="N-linked (GlcNAc...) asparagine" evidence="3">
    <location>
        <position position="25"/>
    </location>
</feature>
<feature type="glycosylation site" description="N-linked (GlcNAc...) asparagine" evidence="3">
    <location>
        <position position="94"/>
    </location>
</feature>
<feature type="glycosylation site" description="N-linked (GlcNAc...) asparagine" evidence="3">
    <location>
        <position position="147"/>
    </location>
</feature>
<feature type="glycosylation site" description="N-linked (GlcNAc...) asparagine" evidence="3">
    <location>
        <position position="184"/>
    </location>
</feature>
<feature type="glycosylation site" description="N-linked (GlcNAc...) asparagine" evidence="3">
    <location>
        <position position="306"/>
    </location>
</feature>
<feature type="glycosylation site" description="N-linked (GlcNAc...) asparagine" evidence="3">
    <location>
        <position position="341"/>
    </location>
</feature>
<feature type="disulfide bond" evidence="1">
    <location>
        <begin position="281"/>
        <end position="316"/>
    </location>
</feature>
<feature type="disulfide bond" evidence="1">
    <location>
        <begin position="388"/>
        <end position="392"/>
    </location>
</feature>
<evidence type="ECO:0000250" key="1">
    <source>
        <dbReference type="UniProtKB" id="A8P0V4"/>
    </source>
</evidence>
<evidence type="ECO:0000255" key="2"/>
<evidence type="ECO:0000255" key="3">
    <source>
        <dbReference type="PROSITE-ProRule" id="PRU00498"/>
    </source>
</evidence>
<evidence type="ECO:0000269" key="4">
    <source>
    </source>
</evidence>
<evidence type="ECO:0000269" key="5">
    <source>
    </source>
</evidence>
<evidence type="ECO:0000303" key="6">
    <source>
    </source>
</evidence>
<evidence type="ECO:0000305" key="7"/>
<evidence type="ECO:0000305" key="8">
    <source>
    </source>
</evidence>